<organism>
    <name type="scientific">Salmonella typhimurium (strain 14028s / SGSC 2262)</name>
    <dbReference type="NCBI Taxonomy" id="588858"/>
    <lineage>
        <taxon>Bacteria</taxon>
        <taxon>Pseudomonadati</taxon>
        <taxon>Pseudomonadota</taxon>
        <taxon>Gammaproteobacteria</taxon>
        <taxon>Enterobacterales</taxon>
        <taxon>Enterobacteriaceae</taxon>
        <taxon>Salmonella</taxon>
    </lineage>
</organism>
<feature type="chain" id="PRO_0000461696" description="Antitoxin TacA1">
    <location>
        <begin position="1"/>
        <end position="95"/>
    </location>
</feature>
<feature type="region of interest" description="Neutralization domain" evidence="4">
    <location>
        <begin position="59"/>
        <end position="95"/>
    </location>
</feature>
<feature type="mutagenesis site" description="Acquires the ability to bind and repress the tacA3-tacT3 promoter." evidence="5">
    <original>Q</original>
    <variation>R</variation>
    <location>
        <position position="13"/>
    </location>
</feature>
<feature type="mutagenesis site" description="54% neutralization of TacT1, 84% neutralization of TacT2." evidence="4">
    <original>VADDPVIEKLLARKPQ</original>
    <variation>PAPNPAIEKLMQTKPP</variation>
    <location>
        <begin position="77"/>
        <end position="92"/>
    </location>
</feature>
<feature type="mutagenesis site" description="56% neutralization of TacT1, 21% neutralization of TacT2." evidence="4">
    <original>DPVIEKLLARKPQ</original>
    <variation>NPAIEKLMATKPP</variation>
    <location>
        <begin position="80"/>
        <end position="92"/>
    </location>
</feature>
<feature type="mutagenesis site" description="69% antitoxin neutralization ability." evidence="4">
    <location>
        <begin position="81"/>
        <end position="95"/>
    </location>
</feature>
<feature type="strand" evidence="15">
    <location>
        <begin position="12"/>
        <end position="19"/>
    </location>
</feature>
<feature type="helix" evidence="15">
    <location>
        <begin position="20"/>
        <end position="33"/>
    </location>
</feature>
<feature type="helix" evidence="15">
    <location>
        <begin position="37"/>
        <end position="57"/>
    </location>
</feature>
<feature type="strand" evidence="14">
    <location>
        <begin position="59"/>
        <end position="61"/>
    </location>
</feature>
<feature type="helix" evidence="14">
    <location>
        <begin position="63"/>
        <end position="73"/>
    </location>
</feature>
<feature type="helix" evidence="14">
    <location>
        <begin position="81"/>
        <end position="88"/>
    </location>
</feature>
<name>TACA1_SALT1</name>
<comment type="function">
    <text evidence="1 2 4">Antitoxin component of a type II toxin-antitoxin (TA) system (PubMed:27264868, PubMed:34556858). Counteracts the toxic effect of cognate toxin TacT1 (T8), but not TacT2 or TacT3 (PubMed:27264868, PubMed:34556858). Plays a role in persister cell formation (PubMed:24408438).</text>
</comment>
<comment type="function">
    <text evidence="5">The TacA1-TacT1 complex binds (and probably represses) its own promoter DNA but not that of tacA3-tacT3, it does not repress the tacA3-tacT3 promoter.</text>
</comment>
<comment type="subunit">
    <text evidence="2 4 10">Homodimer (Probable) (PubMed:34556858). Forms a complex with cognate toxin TacT1 (PubMed:27264868). Forms a 4:2 antitoxin:toxin complex with cognate toxin TacT1 (PubMed:34556858).</text>
</comment>
<comment type="induction">
    <text evidence="1">The tacA1-tacT1 operon is up-regulated 10-fold in a relA-spoT-dependent manner within 30 minutes of phagocytosis by mouse bone marrow-derived macrophages.</text>
</comment>
<comment type="domain">
    <text evidence="4">The neutralization domain (ND) is sufficient to counteract the toxic effect of its cognate toxin via toxin recognition, although other regions also play a role. Exchanging the C-terminus (probably the last 15 residues) for those in TacA2 (probably 17 residues) allows the chimera to neutralize TacT2.</text>
</comment>
<comment type="disruption phenotype">
    <text evidence="1 2 3">Deleting the operon causes 80% reduction in persister cell formation in mouse bone marrow-derived macrophages (PubMed:24408438). All 3 tacA-tacT operons can be deleted without an effect on growth in cell culture (PubMed:27264868, PubMed:29777131).</text>
</comment>
<comment type="similarity">
    <text evidence="9">Belongs to the TacA antitoxin family.</text>
</comment>
<comment type="caution">
    <text evidence="9">It is uncertain whether Met-1 or Met-8 is the initator.</text>
</comment>
<sequence>MLYKGCLMKSDVQLNLRAKESQRALIDAAAEILHKSRTDFILETACQAAEKVILDRRVFNFNDEQYEEFINLLDAPVADDPVIEKLLARKPQWDV</sequence>
<proteinExistence type="evidence at protein level"/>
<accession>A0A0F6B8D9</accession>
<protein>
    <recommendedName>
        <fullName evidence="8">Antitoxin TacA1</fullName>
    </recommendedName>
    <alternativeName>
        <fullName evidence="6 7">Antitoxin A8</fullName>
    </alternativeName>
</protein>
<dbReference type="EMBL" id="CP001363">
    <property type="protein sequence ID" value="ACY90787.1"/>
    <property type="molecule type" value="Genomic_DNA"/>
</dbReference>
<dbReference type="RefSeq" id="WP_000965886.1">
    <property type="nucleotide sequence ID" value="NZ_CP043402.1"/>
</dbReference>
<dbReference type="PDB" id="7AK8">
    <property type="method" value="X-ray"/>
    <property type="resolution" value="2.50 A"/>
    <property type="chains" value="G/H/I/J/K/L=59-95"/>
</dbReference>
<dbReference type="PDB" id="7ZG6">
    <property type="method" value="X-ray"/>
    <property type="resolution" value="1.95 A"/>
    <property type="chains" value="A/B=8-95"/>
</dbReference>
<dbReference type="PDBsum" id="7AK8"/>
<dbReference type="PDBsum" id="7ZG6"/>
<dbReference type="SMR" id="A0A0F6B8D9"/>
<dbReference type="KEGG" id="seo:STM14_4402"/>
<dbReference type="PATRIC" id="fig|588858.6.peg.4017"/>
<dbReference type="HOGENOM" id="CLU_152494_1_1_6"/>
<dbReference type="BioCyc" id="SENT588858:STM14_RS19330-MONOMER"/>
<dbReference type="Proteomes" id="UP000002695">
    <property type="component" value="Chromosome"/>
</dbReference>
<dbReference type="GO" id="GO:0003677">
    <property type="term" value="F:DNA binding"/>
    <property type="evidence" value="ECO:0007669"/>
    <property type="project" value="UniProtKB-KW"/>
</dbReference>
<dbReference type="GO" id="GO:0006355">
    <property type="term" value="P:regulation of DNA-templated transcription"/>
    <property type="evidence" value="ECO:0007669"/>
    <property type="project" value="InterPro"/>
</dbReference>
<dbReference type="Gene3D" id="1.20.5.780">
    <property type="entry name" value="Single helix bin"/>
    <property type="match status" value="1"/>
</dbReference>
<dbReference type="InterPro" id="IPR010985">
    <property type="entry name" value="Ribbon_hlx_hlx"/>
</dbReference>
<dbReference type="InterPro" id="IPR014795">
    <property type="entry name" value="TacA_1-like"/>
</dbReference>
<dbReference type="PANTHER" id="PTHR35401">
    <property type="entry name" value="COPG FAMILY HELIX-TURN-HELIX PROTEIN-RELATED-RELATED"/>
    <property type="match status" value="1"/>
</dbReference>
<dbReference type="PANTHER" id="PTHR35401:SF1">
    <property type="entry name" value="CYTOPLASMIC PROTEIN"/>
    <property type="match status" value="1"/>
</dbReference>
<dbReference type="Pfam" id="PF08681">
    <property type="entry name" value="TacA1"/>
    <property type="match status" value="1"/>
</dbReference>
<dbReference type="SUPFAM" id="SSF47598">
    <property type="entry name" value="Ribbon-helix-helix"/>
    <property type="match status" value="1"/>
</dbReference>
<keyword id="KW-0002">3D-structure</keyword>
<keyword id="KW-0238">DNA-binding</keyword>
<keyword id="KW-0678">Repressor</keyword>
<keyword id="KW-1277">Toxin-antitoxin system</keyword>
<keyword id="KW-0804">Transcription</keyword>
<keyword id="KW-0805">Transcription regulation</keyword>
<gene>
    <name evidence="7 8" type="primary">tacA1</name>
    <name evidence="6 7" type="synonym">a8</name>
    <name evidence="11" type="ordered locus">STM14_4402</name>
</gene>
<evidence type="ECO:0000269" key="1">
    <source>
    </source>
</evidence>
<evidence type="ECO:0000269" key="2">
    <source>
    </source>
</evidence>
<evidence type="ECO:0000269" key="3">
    <source>
    </source>
</evidence>
<evidence type="ECO:0000269" key="4">
    <source>
    </source>
</evidence>
<evidence type="ECO:0000269" key="5">
    <source>
    </source>
</evidence>
<evidence type="ECO:0000303" key="6">
    <source>
    </source>
</evidence>
<evidence type="ECO:0000303" key="7">
    <source>
    </source>
</evidence>
<evidence type="ECO:0000303" key="8">
    <source>
    </source>
</evidence>
<evidence type="ECO:0000305" key="9"/>
<evidence type="ECO:0000305" key="10">
    <source>
    </source>
</evidence>
<evidence type="ECO:0000312" key="11">
    <source>
        <dbReference type="EMBL" id="ACY90787.1"/>
    </source>
</evidence>
<evidence type="ECO:0007744" key="12">
    <source>
        <dbReference type="PDB" id="7AK8"/>
    </source>
</evidence>
<evidence type="ECO:0007744" key="13">
    <source>
        <dbReference type="PDB" id="7ZG6"/>
    </source>
</evidence>
<evidence type="ECO:0007829" key="14">
    <source>
        <dbReference type="PDB" id="7AK8"/>
    </source>
</evidence>
<evidence type="ECO:0007829" key="15">
    <source>
        <dbReference type="PDB" id="7ZG6"/>
    </source>
</evidence>
<reference evidence="11" key="1">
    <citation type="journal article" date="2010" name="J. Bacteriol.">
        <title>Short-term signatures of evolutionary change in the Salmonella enterica serovar typhimurium 14028 genome.</title>
        <authorList>
            <person name="Jarvik T."/>
            <person name="Smillie C."/>
            <person name="Groisman E.A."/>
            <person name="Ochman H."/>
        </authorList>
    </citation>
    <scope>NUCLEOTIDE SEQUENCE [LARGE SCALE GENOMIC DNA]</scope>
    <source>
        <strain>14028s / SGSC 2262</strain>
    </source>
</reference>
<reference key="2">
    <citation type="journal article" date="2014" name="Science">
        <title>Internalization of Salmonella by macrophages induces formation of nonreplicating persisters.</title>
        <authorList>
            <person name="Helaine S."/>
            <person name="Cheverton A.M."/>
            <person name="Watson K.G."/>
            <person name="Faure L.M."/>
            <person name="Matthews S.A."/>
            <person name="Holden D.W."/>
        </authorList>
    </citation>
    <scope>OPERON FUNCTION IN PERSISTER CELL FORMATION</scope>
    <scope>INDUCTION IN HOST MACROPHAGES</scope>
    <scope>DISRUPTION PHENOTYPE</scope>
    <source>
        <strain>14028s / SGSC 2262</strain>
    </source>
</reference>
<reference key="3">
    <citation type="journal article" date="2016" name="Mol. Cell">
        <title>A Salmonella Toxin Promotes Persister Formation through Acetylation of tRNA.</title>
        <authorList>
            <person name="Cheverton A.M."/>
            <person name="Gollan B."/>
            <person name="Przydacz M."/>
            <person name="Wong C.T."/>
            <person name="Mylona A."/>
            <person name="Hare S.A."/>
            <person name="Helaine S."/>
        </authorList>
    </citation>
    <scope>FUNCTION AS AN ANTITOXIN</scope>
    <scope>INTERACTION WITH TACT1</scope>
    <scope>DISRUPTION PHENOTYPE</scope>
    <source>
        <strain>ATCC 14028 / SGSC 2980 / CDC 6516-60 / NCTC 12023</strain>
    </source>
</reference>
<reference key="4">
    <citation type="journal article" date="2018" name="Nat. Commun.">
        <title>Activity of acetyltransferase toxins involved in Salmonella persister formation during macrophage infection.</title>
        <authorList>
            <person name="Rycroft J.A."/>
            <person name="Gollan B."/>
            <person name="Grabe G.J."/>
            <person name="Hall A."/>
            <person name="Cheverton A.M."/>
            <person name="Larrouy-Maumus G."/>
            <person name="Hare S.A."/>
            <person name="Helaine S."/>
        </authorList>
    </citation>
    <scope>DISRUPTION PHENOTYPE</scope>
    <source>
        <strain>14028s / SGSC 2262</strain>
    </source>
</reference>
<reference evidence="12" key="5">
    <citation type="journal article" date="2021" name="Nat. Chem. Biol.">
        <title>Auxiliary interfaces support the evolution of specific toxin-antitoxin pairing.</title>
        <authorList>
            <person name="Grabe G.J."/>
            <person name="Giorgio R.T."/>
            <person name="Hall A.M.J."/>
            <person name="Morgan R.M.L."/>
            <person name="Dubois L."/>
            <person name="Sisley T.A."/>
            <person name="Rycroft J.A."/>
            <person name="Hare S.A."/>
            <person name="Helaine S."/>
        </authorList>
    </citation>
    <scope>X-RAY CRYSTALLOGRAPHY (2.50 ANGSTROMS) OF 59-95 IN COMPLEX WITH TOXIN</scope>
    <scope>FUNCTION AS AN ANTITOXIN</scope>
    <scope>SUBUNIT</scope>
    <scope>DOMAIN</scope>
    <scope>MUTAGENESIS OF 77-VAL--GLN-92; 81-PRO--GLN-92 AND 81-PRO--VAL-95</scope>
    <source>
        <strain>14028s / SGSC 2262</strain>
    </source>
</reference>
<reference evidence="13" key="6">
    <citation type="journal article" date="2024" name="Nat. Struct. Mol. Biol.">
        <title>Molecular stripping underpins derepression of a toxin-antitoxin system.</title>
        <authorList>
            <person name="Grabe G.J."/>
            <person name="Giorgio R.T."/>
            <person name="Wieczor M."/>
            <person name="Gollan B."/>
            <person name="Sargen M."/>
            <person name="Orozco M."/>
            <person name="Hare S.A."/>
            <person name="Helaine S."/>
        </authorList>
    </citation>
    <scope>X-RAY CRYSTALLOGRAPHY (1.95 ANGSTROMS) OF 8-95</scope>
    <scope>FUNCTION</scope>
    <scope>DNA-BINDING</scope>
    <scope>MUTAGENESIS OF GLN-13</scope>
</reference>